<protein>
    <recommendedName>
        <fullName>Bursicon</fullName>
    </recommendedName>
    <alternativeName>
        <fullName>Bursicon subunit alpha</fullName>
    </alternativeName>
    <alternativeName>
        <fullName>Cuticle-tanning hormone</fullName>
    </alternativeName>
</protein>
<organism>
    <name type="scientific">Drosophila melanogaster</name>
    <name type="common">Fruit fly</name>
    <dbReference type="NCBI Taxonomy" id="7227"/>
    <lineage>
        <taxon>Eukaryota</taxon>
        <taxon>Metazoa</taxon>
        <taxon>Ecdysozoa</taxon>
        <taxon>Arthropoda</taxon>
        <taxon>Hexapoda</taxon>
        <taxon>Insecta</taxon>
        <taxon>Pterygota</taxon>
        <taxon>Neoptera</taxon>
        <taxon>Endopterygota</taxon>
        <taxon>Diptera</taxon>
        <taxon>Brachycera</taxon>
        <taxon>Muscomorpha</taxon>
        <taxon>Ephydroidea</taxon>
        <taxon>Drosophilidae</taxon>
        <taxon>Drosophila</taxon>
        <taxon>Sophophora</taxon>
    </lineage>
</organism>
<gene>
    <name evidence="12" type="primary">Burs</name>
    <name type="synonym">burs-alpha</name>
    <name type="ORF">CG13419</name>
</gene>
<accession>Q9VD83</accession>
<accession>A0APJ5</accession>
<accession>Q573B6</accession>
<sequence length="173" mass="19223">MLRHLLRHENNKVFVLILLYCVLVSILKLCTAQPDSSVAATDNDITHLGDDCQVTPVIHVLQYPGCVPKPIPSFACVGRCASYIQVSGSKIWQMERSCMCCQESGEREAAVSLFCPKVKPGERKFKKVLTKAPLECMCRPCTSIEESGIIPQEIAGYSDEGPLNNHFRRIALQ</sequence>
<keyword id="KW-1015">Disulfide bond</keyword>
<keyword id="KW-0372">Hormone</keyword>
<keyword id="KW-1185">Reference proteome</keyword>
<keyword id="KW-0964">Secreted</keyword>
<keyword id="KW-0732">Signal</keyword>
<name>BURS_DROME</name>
<feature type="signal peptide" evidence="2">
    <location>
        <begin position="1"/>
        <end position="32"/>
    </location>
</feature>
<feature type="chain" id="PRO_0000020837" description="Bursicon">
    <location>
        <begin position="33"/>
        <end position="173"/>
    </location>
</feature>
<feature type="domain" description="CTCK" evidence="3">
    <location>
        <begin position="52"/>
        <end position="142"/>
    </location>
</feature>
<feature type="disulfide bond" evidence="1 3">
    <location>
        <begin position="52"/>
        <end position="101"/>
    </location>
</feature>
<feature type="disulfide bond" evidence="1 3">
    <location>
        <begin position="66"/>
        <end position="115"/>
    </location>
</feature>
<feature type="disulfide bond" evidence="1 3">
    <location>
        <begin position="76"/>
        <end position="136"/>
    </location>
</feature>
<feature type="disulfide bond" evidence="1 3">
    <location>
        <begin position="80"/>
        <end position="138"/>
    </location>
</feature>
<feature type="disulfide bond" evidence="3">
    <location>
        <begin position="98"/>
        <end position="141"/>
    </location>
</feature>
<feature type="disulfide bond" description="Interchain" evidence="8">
    <location>
        <position position="100"/>
    </location>
</feature>
<feature type="mutagenesis site" description="In allele Z1091; wing expansion defects, failure to sclerotize cuticle." evidence="5">
    <original>C</original>
    <variation>Y</variation>
    <location>
        <position position="115"/>
    </location>
</feature>
<feature type="mutagenesis site" description="In allele Z1140; wing expansion defects." evidence="5">
    <original>T</original>
    <variation>C</variation>
    <location>
        <position position="130"/>
    </location>
</feature>
<feature type="mutagenesis site" description="In allele Z5569; wing expansion defects, failure to sclerotize cuticle." evidence="5">
    <original>G</original>
    <variation>C</variation>
    <location>
        <position position="148"/>
    </location>
</feature>
<reference evidence="9 11" key="1">
    <citation type="journal article" date="2004" name="Curr. Biol.">
        <title>Identification of the gene encoding bursicon, an insect neuropeptide responsible for cuticle sclerotization and wing spreading.</title>
        <authorList>
            <person name="Dewey E.M."/>
            <person name="McNabb S.L."/>
            <person name="Ewer J."/>
            <person name="Kuo G.R."/>
            <person name="Takanishi C.L."/>
            <person name="Truman J.W."/>
            <person name="Honegger H.-W."/>
        </authorList>
    </citation>
    <scope>NUCLEOTIDE SEQUENCE [GENOMIC DNA / MRNA]</scope>
    <scope>FUNCTION</scope>
    <scope>SUBCELLULAR LOCATION</scope>
    <scope>TISSUE SPECIFICITY</scope>
    <scope>MUTAGENESIS OF CYS-115; THR-130 AND GLY-148</scope>
</reference>
<reference key="2">
    <citation type="journal article" date="2005" name="FEBS Lett.">
        <title>Drosophila molting neurohormone bursicon is a heterodimer and the natural agonist of the orphan receptor DLGR2.</title>
        <authorList>
            <person name="Mendive F.M."/>
            <person name="Van Loy T."/>
            <person name="Claeysen S."/>
            <person name="Poels J."/>
            <person name="Williamson M."/>
            <person name="Hauser F."/>
            <person name="Grimmelikhuijzen C.J.P."/>
            <person name="Vassart G."/>
            <person name="Vanden Broeck J.J.M."/>
        </authorList>
    </citation>
    <scope>NUCLEOTIDE SEQUENCE [MRNA]</scope>
    <scope>FUNCTION</scope>
    <scope>INTERACTION WITH PBURS</scope>
</reference>
<reference key="3">
    <citation type="journal article" date="2006" name="Genetics">
        <title>Widespread adaptive evolution of Drosophila genes with sex-biased expression.</title>
        <authorList>
            <person name="Proeschel M."/>
            <person name="Zhang Z."/>
            <person name="Parsch J."/>
        </authorList>
    </citation>
    <scope>NUCLEOTIDE SEQUENCE [GENOMIC DNA]</scope>
    <source>
        <strain>ZBMEL131</strain>
        <strain>ZBMEL145</strain>
        <strain>ZBMEL157</strain>
        <strain>ZBMEL186</strain>
        <strain>ZBMEL191</strain>
        <strain>ZBMEL229</strain>
        <strain>ZBMEL377</strain>
        <strain>ZBMEL384</strain>
        <strain>ZBMEL398</strain>
        <strain>ZBMEL82</strain>
        <strain>ZBMEL84</strain>
        <strain>ZBMEL95</strain>
    </source>
</reference>
<reference evidence="10" key="4">
    <citation type="journal article" date="2000" name="Science">
        <title>The genome sequence of Drosophila melanogaster.</title>
        <authorList>
            <person name="Adams M.D."/>
            <person name="Celniker S.E."/>
            <person name="Holt R.A."/>
            <person name="Evans C.A."/>
            <person name="Gocayne J.D."/>
            <person name="Amanatides P.G."/>
            <person name="Scherer S.E."/>
            <person name="Li P.W."/>
            <person name="Hoskins R.A."/>
            <person name="Galle R.F."/>
            <person name="George R.A."/>
            <person name="Lewis S.E."/>
            <person name="Richards S."/>
            <person name="Ashburner M."/>
            <person name="Henderson S.N."/>
            <person name="Sutton G.G."/>
            <person name="Wortman J.R."/>
            <person name="Yandell M.D."/>
            <person name="Zhang Q."/>
            <person name="Chen L.X."/>
            <person name="Brandon R.C."/>
            <person name="Rogers Y.-H.C."/>
            <person name="Blazej R.G."/>
            <person name="Champe M."/>
            <person name="Pfeiffer B.D."/>
            <person name="Wan K.H."/>
            <person name="Doyle C."/>
            <person name="Baxter E.G."/>
            <person name="Helt G."/>
            <person name="Nelson C.R."/>
            <person name="Miklos G.L.G."/>
            <person name="Abril J.F."/>
            <person name="Agbayani A."/>
            <person name="An H.-J."/>
            <person name="Andrews-Pfannkoch C."/>
            <person name="Baldwin D."/>
            <person name="Ballew R.M."/>
            <person name="Basu A."/>
            <person name="Baxendale J."/>
            <person name="Bayraktaroglu L."/>
            <person name="Beasley E.M."/>
            <person name="Beeson K.Y."/>
            <person name="Benos P.V."/>
            <person name="Berman B.P."/>
            <person name="Bhandari D."/>
            <person name="Bolshakov S."/>
            <person name="Borkova D."/>
            <person name="Botchan M.R."/>
            <person name="Bouck J."/>
            <person name="Brokstein P."/>
            <person name="Brottier P."/>
            <person name="Burtis K.C."/>
            <person name="Busam D.A."/>
            <person name="Butler H."/>
            <person name="Cadieu E."/>
            <person name="Center A."/>
            <person name="Chandra I."/>
            <person name="Cherry J.M."/>
            <person name="Cawley S."/>
            <person name="Dahlke C."/>
            <person name="Davenport L.B."/>
            <person name="Davies P."/>
            <person name="de Pablos B."/>
            <person name="Delcher A."/>
            <person name="Deng Z."/>
            <person name="Mays A.D."/>
            <person name="Dew I."/>
            <person name="Dietz S.M."/>
            <person name="Dodson K."/>
            <person name="Doup L.E."/>
            <person name="Downes M."/>
            <person name="Dugan-Rocha S."/>
            <person name="Dunkov B.C."/>
            <person name="Dunn P."/>
            <person name="Durbin K.J."/>
            <person name="Evangelista C.C."/>
            <person name="Ferraz C."/>
            <person name="Ferriera S."/>
            <person name="Fleischmann W."/>
            <person name="Fosler C."/>
            <person name="Gabrielian A.E."/>
            <person name="Garg N.S."/>
            <person name="Gelbart W.M."/>
            <person name="Glasser K."/>
            <person name="Glodek A."/>
            <person name="Gong F."/>
            <person name="Gorrell J.H."/>
            <person name="Gu Z."/>
            <person name="Guan P."/>
            <person name="Harris M."/>
            <person name="Harris N.L."/>
            <person name="Harvey D.A."/>
            <person name="Heiman T.J."/>
            <person name="Hernandez J.R."/>
            <person name="Houck J."/>
            <person name="Hostin D."/>
            <person name="Houston K.A."/>
            <person name="Howland T.J."/>
            <person name="Wei M.-H."/>
            <person name="Ibegwam C."/>
            <person name="Jalali M."/>
            <person name="Kalush F."/>
            <person name="Karpen G.H."/>
            <person name="Ke Z."/>
            <person name="Kennison J.A."/>
            <person name="Ketchum K.A."/>
            <person name="Kimmel B.E."/>
            <person name="Kodira C.D."/>
            <person name="Kraft C.L."/>
            <person name="Kravitz S."/>
            <person name="Kulp D."/>
            <person name="Lai Z."/>
            <person name="Lasko P."/>
            <person name="Lei Y."/>
            <person name="Levitsky A.A."/>
            <person name="Li J.H."/>
            <person name="Li Z."/>
            <person name="Liang Y."/>
            <person name="Lin X."/>
            <person name="Liu X."/>
            <person name="Mattei B."/>
            <person name="McIntosh T.C."/>
            <person name="McLeod M.P."/>
            <person name="McPherson D."/>
            <person name="Merkulov G."/>
            <person name="Milshina N.V."/>
            <person name="Mobarry C."/>
            <person name="Morris J."/>
            <person name="Moshrefi A."/>
            <person name="Mount S.M."/>
            <person name="Moy M."/>
            <person name="Murphy B."/>
            <person name="Murphy L."/>
            <person name="Muzny D.M."/>
            <person name="Nelson D.L."/>
            <person name="Nelson D.R."/>
            <person name="Nelson K.A."/>
            <person name="Nixon K."/>
            <person name="Nusskern D.R."/>
            <person name="Pacleb J.M."/>
            <person name="Palazzolo M."/>
            <person name="Pittman G.S."/>
            <person name="Pan S."/>
            <person name="Pollard J."/>
            <person name="Puri V."/>
            <person name="Reese M.G."/>
            <person name="Reinert K."/>
            <person name="Remington K."/>
            <person name="Saunders R.D.C."/>
            <person name="Scheeler F."/>
            <person name="Shen H."/>
            <person name="Shue B.C."/>
            <person name="Siden-Kiamos I."/>
            <person name="Simpson M."/>
            <person name="Skupski M.P."/>
            <person name="Smith T.J."/>
            <person name="Spier E."/>
            <person name="Spradling A.C."/>
            <person name="Stapleton M."/>
            <person name="Strong R."/>
            <person name="Sun E."/>
            <person name="Svirskas R."/>
            <person name="Tector C."/>
            <person name="Turner R."/>
            <person name="Venter E."/>
            <person name="Wang A.H."/>
            <person name="Wang X."/>
            <person name="Wang Z.-Y."/>
            <person name="Wassarman D.A."/>
            <person name="Weinstock G.M."/>
            <person name="Weissenbach J."/>
            <person name="Williams S.M."/>
            <person name="Woodage T."/>
            <person name="Worley K.C."/>
            <person name="Wu D."/>
            <person name="Yang S."/>
            <person name="Yao Q.A."/>
            <person name="Ye J."/>
            <person name="Yeh R.-F."/>
            <person name="Zaveri J.S."/>
            <person name="Zhan M."/>
            <person name="Zhang G."/>
            <person name="Zhao Q."/>
            <person name="Zheng L."/>
            <person name="Zheng X.H."/>
            <person name="Zhong F.N."/>
            <person name="Zhong W."/>
            <person name="Zhou X."/>
            <person name="Zhu S.C."/>
            <person name="Zhu X."/>
            <person name="Smith H.O."/>
            <person name="Gibbs R.A."/>
            <person name="Myers E.W."/>
            <person name="Rubin G.M."/>
            <person name="Venter J.C."/>
        </authorList>
    </citation>
    <scope>NUCLEOTIDE SEQUENCE [LARGE SCALE GENOMIC DNA]</scope>
    <source>
        <strain evidence="4">Berkeley</strain>
    </source>
</reference>
<reference key="5">
    <citation type="journal article" date="2002" name="Genome Biol.">
        <title>Annotation of the Drosophila melanogaster euchromatic genome: a systematic review.</title>
        <authorList>
            <person name="Misra S."/>
            <person name="Crosby M.A."/>
            <person name="Mungall C.J."/>
            <person name="Matthews B.B."/>
            <person name="Campbell K.S."/>
            <person name="Hradecky P."/>
            <person name="Huang Y."/>
            <person name="Kaminker J.S."/>
            <person name="Millburn G.H."/>
            <person name="Prochnik S.E."/>
            <person name="Smith C.D."/>
            <person name="Tupy J.L."/>
            <person name="Whitfield E.J."/>
            <person name="Bayraktaroglu L."/>
            <person name="Berman B.P."/>
            <person name="Bettencourt B.R."/>
            <person name="Celniker S.E."/>
            <person name="de Grey A.D.N.J."/>
            <person name="Drysdale R.A."/>
            <person name="Harris N.L."/>
            <person name="Richter J."/>
            <person name="Russo S."/>
            <person name="Schroeder A.J."/>
            <person name="Shu S.Q."/>
            <person name="Stapleton M."/>
            <person name="Yamada C."/>
            <person name="Ashburner M."/>
            <person name="Gelbart W.M."/>
            <person name="Rubin G.M."/>
            <person name="Lewis S.E."/>
        </authorList>
    </citation>
    <scope>GENOME REANNOTATION</scope>
    <source>
        <strain>Berkeley</strain>
    </source>
</reference>
<reference key="6">
    <citation type="journal article" date="2005" name="Proc. Natl. Acad. Sci. U.S.A.">
        <title>Bursicon, the insect cuticle-hardening hormone, is a heterodimeric cystine knot protein that activates G protein-coupled receptor LGR2.</title>
        <authorList>
            <person name="Luo C.-W."/>
            <person name="Dewey E.M."/>
            <person name="Sudo S."/>
            <person name="Ewer J."/>
            <person name="Hsu S.Y."/>
            <person name="Honegger H.-W."/>
            <person name="Hsueh A.J.W."/>
        </authorList>
    </citation>
    <scope>FUNCTION</scope>
    <scope>INTERACTION WITH PBURS</scope>
    <scope>SUBCELLULAR LOCATION</scope>
    <scope>TISSUE SPECIFICITY</scope>
    <scope>DEVELOPMENTAL STAGE</scope>
</reference>
<comment type="function">
    <text evidence="5 6 7">Final heterodimeric neurohormone released at the end of the molting cycle, involved in the sclerotization (tanning) of the insect cuticle, melanization and wing spreading. Heterodimer specifically activates the G protein-coupled receptor rk.</text>
</comment>
<comment type="subunit">
    <text>Heterodimer of Burs and Pburs.</text>
</comment>
<comment type="subcellular location">
    <subcellularLocation>
        <location evidence="5 6">Secreted</location>
    </subcellularLocation>
</comment>
<comment type="tissue specificity">
    <text evidence="5 6">Expressed in one to two pairs of neurons in each of the thoracic and abdominal neuromeres of the larval CNS. Coexpressed with CCAP in most CCAP-specific neurons. Coexpressed with Pburs in four bilateral neurons in thoracic and abdominal neuromeres of the ventral nervous system.</text>
</comment>
<comment type="developmental stage">
    <text evidence="6">Expression is low in larval stages and increases before ecdysis; consistent with role in postecdysial cuticle changes.</text>
</comment>
<dbReference type="EMBL" id="AY672905">
    <property type="protein sequence ID" value="AAT72327.1"/>
    <property type="molecule type" value="mRNA"/>
</dbReference>
<dbReference type="EMBL" id="AY672906">
    <property type="protein sequence ID" value="AAT72328.1"/>
    <property type="molecule type" value="Genomic_DNA"/>
</dbReference>
<dbReference type="EMBL" id="AJ862523">
    <property type="protein sequence ID" value="CAH74223.1"/>
    <property type="molecule type" value="mRNA"/>
</dbReference>
<dbReference type="EMBL" id="AM294583">
    <property type="protein sequence ID" value="CAL26566.1"/>
    <property type="molecule type" value="Genomic_DNA"/>
</dbReference>
<dbReference type="EMBL" id="AM294584">
    <property type="protein sequence ID" value="CAL26567.1"/>
    <property type="molecule type" value="Genomic_DNA"/>
</dbReference>
<dbReference type="EMBL" id="AM294585">
    <property type="protein sequence ID" value="CAL26568.1"/>
    <property type="molecule type" value="Genomic_DNA"/>
</dbReference>
<dbReference type="EMBL" id="AM294586">
    <property type="protein sequence ID" value="CAL26569.1"/>
    <property type="molecule type" value="Genomic_DNA"/>
</dbReference>
<dbReference type="EMBL" id="AM294587">
    <property type="protein sequence ID" value="CAL26570.1"/>
    <property type="molecule type" value="Genomic_DNA"/>
</dbReference>
<dbReference type="EMBL" id="AM294588">
    <property type="protein sequence ID" value="CAL26571.1"/>
    <property type="molecule type" value="Genomic_DNA"/>
</dbReference>
<dbReference type="EMBL" id="AM294589">
    <property type="protein sequence ID" value="CAL26572.1"/>
    <property type="molecule type" value="Genomic_DNA"/>
</dbReference>
<dbReference type="EMBL" id="AM294590">
    <property type="protein sequence ID" value="CAL26573.1"/>
    <property type="molecule type" value="Genomic_DNA"/>
</dbReference>
<dbReference type="EMBL" id="AM294591">
    <property type="protein sequence ID" value="CAL26574.1"/>
    <property type="molecule type" value="Genomic_DNA"/>
</dbReference>
<dbReference type="EMBL" id="AM294592">
    <property type="protein sequence ID" value="CAL26575.1"/>
    <property type="molecule type" value="Genomic_DNA"/>
</dbReference>
<dbReference type="EMBL" id="AM294593">
    <property type="protein sequence ID" value="CAL26576.1"/>
    <property type="molecule type" value="Genomic_DNA"/>
</dbReference>
<dbReference type="EMBL" id="AM294594">
    <property type="protein sequence ID" value="CAL26577.1"/>
    <property type="molecule type" value="Genomic_DNA"/>
</dbReference>
<dbReference type="EMBL" id="AE014297">
    <property type="protein sequence ID" value="AAF55915.1"/>
    <property type="molecule type" value="Genomic_DNA"/>
</dbReference>
<dbReference type="RefSeq" id="NP_650983.1">
    <property type="nucleotide sequence ID" value="NM_142726.2"/>
</dbReference>
<dbReference type="BioGRID" id="67525">
    <property type="interactions" value="4"/>
</dbReference>
<dbReference type="FunCoup" id="Q9VD83">
    <property type="interactions" value="3"/>
</dbReference>
<dbReference type="STRING" id="7227.FBpp0083529"/>
<dbReference type="PaxDb" id="7227-FBpp0083529"/>
<dbReference type="DNASU" id="42560"/>
<dbReference type="EnsemblMetazoa" id="FBtr0084131">
    <property type="protein sequence ID" value="FBpp0083529"/>
    <property type="gene ID" value="FBgn0038901"/>
</dbReference>
<dbReference type="GeneID" id="42560"/>
<dbReference type="KEGG" id="dme:Dmel_CG13419"/>
<dbReference type="AGR" id="FB:FBgn0038901"/>
<dbReference type="CTD" id="42560"/>
<dbReference type="FlyBase" id="FBgn0038901">
    <property type="gene designation" value="Burs"/>
</dbReference>
<dbReference type="VEuPathDB" id="VectorBase:FBgn0038901"/>
<dbReference type="eggNOG" id="KOG1216">
    <property type="taxonomic scope" value="Eukaryota"/>
</dbReference>
<dbReference type="HOGENOM" id="CLU_132265_0_0_1"/>
<dbReference type="InParanoid" id="Q9VD83"/>
<dbReference type="OMA" id="SFACTGR"/>
<dbReference type="OrthoDB" id="6493004at2759"/>
<dbReference type="PhylomeDB" id="Q9VD83"/>
<dbReference type="BioGRID-ORCS" id="42560">
    <property type="hits" value="0 hits in 1 CRISPR screen"/>
</dbReference>
<dbReference type="GenomeRNAi" id="42560"/>
<dbReference type="PRO" id="PR:Q9VD83"/>
<dbReference type="Proteomes" id="UP000000803">
    <property type="component" value="Chromosome 3R"/>
</dbReference>
<dbReference type="Bgee" id="FBgn0038901">
    <property type="expression patterns" value="Expressed in enterocyte of posterior adult midgut epithelium (Drosophila) in digestive tract and 11 other cell types or tissues"/>
</dbReference>
<dbReference type="ExpressionAtlas" id="Q9VD83">
    <property type="expression patterns" value="baseline and differential"/>
</dbReference>
<dbReference type="GO" id="GO:0031395">
    <property type="term" value="C:bursicon neuropeptide hormone complex"/>
    <property type="evidence" value="ECO:0000314"/>
    <property type="project" value="FlyBase"/>
</dbReference>
<dbReference type="GO" id="GO:0005576">
    <property type="term" value="C:extracellular region"/>
    <property type="evidence" value="ECO:0000314"/>
    <property type="project" value="UniProtKB"/>
</dbReference>
<dbReference type="GO" id="GO:0005615">
    <property type="term" value="C:extracellular space"/>
    <property type="evidence" value="ECO:0000318"/>
    <property type="project" value="GO_Central"/>
</dbReference>
<dbReference type="GO" id="GO:0043195">
    <property type="term" value="C:terminal bouton"/>
    <property type="evidence" value="ECO:0000314"/>
    <property type="project" value="FlyBase"/>
</dbReference>
<dbReference type="GO" id="GO:0005179">
    <property type="term" value="F:hormone activity"/>
    <property type="evidence" value="ECO:0000315"/>
    <property type="project" value="UniProtKB"/>
</dbReference>
<dbReference type="GO" id="GO:0046982">
    <property type="term" value="F:protein heterodimerization activity"/>
    <property type="evidence" value="ECO:0000353"/>
    <property type="project" value="UniProtKB"/>
</dbReference>
<dbReference type="GO" id="GO:0048018">
    <property type="term" value="F:receptor ligand activity"/>
    <property type="evidence" value="ECO:0000318"/>
    <property type="project" value="GO_Central"/>
</dbReference>
<dbReference type="GO" id="GO:0030709">
    <property type="term" value="P:border follicle cell delamination"/>
    <property type="evidence" value="ECO:0000315"/>
    <property type="project" value="FlyBase"/>
</dbReference>
<dbReference type="GO" id="GO:0007298">
    <property type="term" value="P:border follicle cell migration"/>
    <property type="evidence" value="ECO:0000315"/>
    <property type="project" value="FlyBase"/>
</dbReference>
<dbReference type="GO" id="GO:0007593">
    <property type="term" value="P:chitin-based cuticle sclerotization"/>
    <property type="evidence" value="ECO:0000315"/>
    <property type="project" value="UniProtKB"/>
</dbReference>
<dbReference type="GO" id="GO:0048067">
    <property type="term" value="P:cuticle pigmentation"/>
    <property type="evidence" value="ECO:0000315"/>
    <property type="project" value="UniProtKB"/>
</dbReference>
<dbReference type="GO" id="GO:0036335">
    <property type="term" value="P:intestinal stem cell homeostasis"/>
    <property type="evidence" value="ECO:0000315"/>
    <property type="project" value="FlyBase"/>
</dbReference>
<dbReference type="FunFam" id="2.10.90.10:FF:000054">
    <property type="entry name" value="Bursicon"/>
    <property type="match status" value="1"/>
</dbReference>
<dbReference type="Gene3D" id="2.10.90.10">
    <property type="entry name" value="Cystine-knot cytokines"/>
    <property type="match status" value="1"/>
</dbReference>
<dbReference type="InterPro" id="IPR006207">
    <property type="entry name" value="Cys_knot_C"/>
</dbReference>
<dbReference type="InterPro" id="IPR029034">
    <property type="entry name" value="Cystine-knot_cytokine"/>
</dbReference>
<dbReference type="InterPro" id="IPR004133">
    <property type="entry name" value="DAN"/>
</dbReference>
<dbReference type="PANTHER" id="PTHR15283:SF7">
    <property type="entry name" value="BURSICON"/>
    <property type="match status" value="1"/>
</dbReference>
<dbReference type="PANTHER" id="PTHR15283">
    <property type="entry name" value="GREMLIN 1"/>
    <property type="match status" value="1"/>
</dbReference>
<dbReference type="Pfam" id="PF03045">
    <property type="entry name" value="DAN"/>
    <property type="match status" value="1"/>
</dbReference>
<dbReference type="PROSITE" id="PS01225">
    <property type="entry name" value="CTCK_2"/>
    <property type="match status" value="1"/>
</dbReference>
<evidence type="ECO:0000250" key="1">
    <source>
        <dbReference type="UniProtKB" id="P04275"/>
    </source>
</evidence>
<evidence type="ECO:0000255" key="2"/>
<evidence type="ECO:0000255" key="3">
    <source>
        <dbReference type="PROSITE-ProRule" id="PRU00039"/>
    </source>
</evidence>
<evidence type="ECO:0000269" key="4">
    <source>
    </source>
</evidence>
<evidence type="ECO:0000269" key="5">
    <source>
    </source>
</evidence>
<evidence type="ECO:0000269" key="6">
    <source>
    </source>
</evidence>
<evidence type="ECO:0000269" key="7">
    <source>
    </source>
</evidence>
<evidence type="ECO:0000303" key="8">
    <source>
    </source>
</evidence>
<evidence type="ECO:0000305" key="9"/>
<evidence type="ECO:0000312" key="10">
    <source>
        <dbReference type="EMBL" id="AAF55915.1"/>
    </source>
</evidence>
<evidence type="ECO:0000312" key="11">
    <source>
        <dbReference type="EMBL" id="AAT72327.1"/>
    </source>
</evidence>
<evidence type="ECO:0000312" key="12">
    <source>
        <dbReference type="FlyBase" id="FBgn0038901"/>
    </source>
</evidence>
<proteinExistence type="evidence at protein level"/>